<evidence type="ECO:0000255" key="1">
    <source>
        <dbReference type="HAMAP-Rule" id="MF_00113"/>
    </source>
</evidence>
<dbReference type="EC" id="2.4.99.17" evidence="1"/>
<dbReference type="EMBL" id="CP000447">
    <property type="protein sequence ID" value="ABI72543.1"/>
    <property type="molecule type" value="Genomic_DNA"/>
</dbReference>
<dbReference type="RefSeq" id="WP_011638152.1">
    <property type="nucleotide sequence ID" value="NC_008345.1"/>
</dbReference>
<dbReference type="SMR" id="Q07ZM1"/>
<dbReference type="STRING" id="318167.Sfri_2703"/>
<dbReference type="KEGG" id="sfr:Sfri_2703"/>
<dbReference type="eggNOG" id="COG0809">
    <property type="taxonomic scope" value="Bacteria"/>
</dbReference>
<dbReference type="HOGENOM" id="CLU_039110_1_0_6"/>
<dbReference type="OrthoDB" id="9805933at2"/>
<dbReference type="UniPathway" id="UPA00392"/>
<dbReference type="Proteomes" id="UP000000684">
    <property type="component" value="Chromosome"/>
</dbReference>
<dbReference type="GO" id="GO:0005737">
    <property type="term" value="C:cytoplasm"/>
    <property type="evidence" value="ECO:0007669"/>
    <property type="project" value="UniProtKB-SubCell"/>
</dbReference>
<dbReference type="GO" id="GO:0051075">
    <property type="term" value="F:S-adenosylmethionine:tRNA ribosyltransferase-isomerase activity"/>
    <property type="evidence" value="ECO:0007669"/>
    <property type="project" value="UniProtKB-EC"/>
</dbReference>
<dbReference type="GO" id="GO:0008616">
    <property type="term" value="P:queuosine biosynthetic process"/>
    <property type="evidence" value="ECO:0007669"/>
    <property type="project" value="UniProtKB-UniRule"/>
</dbReference>
<dbReference type="GO" id="GO:0002099">
    <property type="term" value="P:tRNA wobble guanine modification"/>
    <property type="evidence" value="ECO:0007669"/>
    <property type="project" value="TreeGrafter"/>
</dbReference>
<dbReference type="FunFam" id="2.40.10.240:FF:000001">
    <property type="entry name" value="S-adenosylmethionine:tRNA ribosyltransferase-isomerase"/>
    <property type="match status" value="1"/>
</dbReference>
<dbReference type="FunFam" id="3.40.1780.10:FF:000001">
    <property type="entry name" value="S-adenosylmethionine:tRNA ribosyltransferase-isomerase"/>
    <property type="match status" value="1"/>
</dbReference>
<dbReference type="Gene3D" id="2.40.10.240">
    <property type="entry name" value="QueA-like"/>
    <property type="match status" value="1"/>
</dbReference>
<dbReference type="Gene3D" id="3.40.1780.10">
    <property type="entry name" value="QueA-like"/>
    <property type="match status" value="1"/>
</dbReference>
<dbReference type="HAMAP" id="MF_00113">
    <property type="entry name" value="QueA"/>
    <property type="match status" value="1"/>
</dbReference>
<dbReference type="InterPro" id="IPR003699">
    <property type="entry name" value="QueA"/>
</dbReference>
<dbReference type="InterPro" id="IPR042118">
    <property type="entry name" value="QueA_dom1"/>
</dbReference>
<dbReference type="InterPro" id="IPR042119">
    <property type="entry name" value="QueA_dom2"/>
</dbReference>
<dbReference type="InterPro" id="IPR036100">
    <property type="entry name" value="QueA_sf"/>
</dbReference>
<dbReference type="NCBIfam" id="NF001140">
    <property type="entry name" value="PRK00147.1"/>
    <property type="match status" value="1"/>
</dbReference>
<dbReference type="NCBIfam" id="TIGR00113">
    <property type="entry name" value="queA"/>
    <property type="match status" value="1"/>
</dbReference>
<dbReference type="PANTHER" id="PTHR30307">
    <property type="entry name" value="S-ADENOSYLMETHIONINE:TRNA RIBOSYLTRANSFERASE-ISOMERASE"/>
    <property type="match status" value="1"/>
</dbReference>
<dbReference type="PANTHER" id="PTHR30307:SF0">
    <property type="entry name" value="S-ADENOSYLMETHIONINE:TRNA RIBOSYLTRANSFERASE-ISOMERASE"/>
    <property type="match status" value="1"/>
</dbReference>
<dbReference type="Pfam" id="PF02547">
    <property type="entry name" value="Queuosine_synth"/>
    <property type="match status" value="1"/>
</dbReference>
<dbReference type="SUPFAM" id="SSF111337">
    <property type="entry name" value="QueA-like"/>
    <property type="match status" value="1"/>
</dbReference>
<gene>
    <name evidence="1" type="primary">queA</name>
    <name type="ordered locus">Sfri_2703</name>
</gene>
<feature type="chain" id="PRO_1000015271" description="S-adenosylmethionine:tRNA ribosyltransferase-isomerase">
    <location>
        <begin position="1"/>
        <end position="346"/>
    </location>
</feature>
<proteinExistence type="inferred from homology"/>
<reference key="1">
    <citation type="submission" date="2006-08" db="EMBL/GenBank/DDBJ databases">
        <title>Complete sequence of Shewanella frigidimarina NCIMB 400.</title>
        <authorList>
            <consortium name="US DOE Joint Genome Institute"/>
            <person name="Copeland A."/>
            <person name="Lucas S."/>
            <person name="Lapidus A."/>
            <person name="Barry K."/>
            <person name="Detter J.C."/>
            <person name="Glavina del Rio T."/>
            <person name="Hammon N."/>
            <person name="Israni S."/>
            <person name="Dalin E."/>
            <person name="Tice H."/>
            <person name="Pitluck S."/>
            <person name="Fredrickson J.K."/>
            <person name="Kolker E."/>
            <person name="McCuel L.A."/>
            <person name="DiChristina T."/>
            <person name="Nealson K.H."/>
            <person name="Newman D."/>
            <person name="Tiedje J.M."/>
            <person name="Zhou J."/>
            <person name="Romine M.F."/>
            <person name="Culley D.E."/>
            <person name="Serres M."/>
            <person name="Chertkov O."/>
            <person name="Brettin T."/>
            <person name="Bruce D."/>
            <person name="Han C."/>
            <person name="Tapia R."/>
            <person name="Gilna P."/>
            <person name="Schmutz J."/>
            <person name="Larimer F."/>
            <person name="Land M."/>
            <person name="Hauser L."/>
            <person name="Kyrpides N."/>
            <person name="Mikhailova N."/>
            <person name="Richardson P."/>
        </authorList>
    </citation>
    <scope>NUCLEOTIDE SEQUENCE [LARGE SCALE GENOMIC DNA]</scope>
    <source>
        <strain>NCIMB 400</strain>
    </source>
</reference>
<keyword id="KW-0963">Cytoplasm</keyword>
<keyword id="KW-0671">Queuosine biosynthesis</keyword>
<keyword id="KW-1185">Reference proteome</keyword>
<keyword id="KW-0949">S-adenosyl-L-methionine</keyword>
<keyword id="KW-0808">Transferase</keyword>
<protein>
    <recommendedName>
        <fullName evidence="1">S-adenosylmethionine:tRNA ribosyltransferase-isomerase</fullName>
        <ecNumber evidence="1">2.4.99.17</ecNumber>
    </recommendedName>
    <alternativeName>
        <fullName evidence="1">Queuosine biosynthesis protein QueA</fullName>
    </alternativeName>
</protein>
<sequence length="346" mass="38353">MRVADFSFDLPDELIARYPTAQRNASRLLTLSGENSELADKKFTDLFNLINPGDLMVFNNTRVIPARLFGQKSTGGKLEILVERMLDDKRILAHVRSSKSPKVDTLIDLDGGYQMKMLARHDALFELELQSDKTILEVLEDVGHMPLPPYIDRPDEDTDKERYQTVYNQTPGAVAAPTAGLHFDDAMLADLKAKGVNIAFVTLHVGAGTFQPVRVDNVLEHKMHSEWANVSQEVVDLIAQTKAAGNRVVAVGTTSVRSLESAARASGDSPLEAFSGDTDIFIYPGFQFKVVDAMVTNFHLPESTLIMLLSAFAGYEAVMKAYQHAITQKYRFFSYGDAMFVTKKAP</sequence>
<comment type="function">
    <text evidence="1">Transfers and isomerizes the ribose moiety from AdoMet to the 7-aminomethyl group of 7-deazaguanine (preQ1-tRNA) to give epoxyqueuosine (oQ-tRNA).</text>
</comment>
<comment type="catalytic activity">
    <reaction evidence="1">
        <text>7-aminomethyl-7-carbaguanosine(34) in tRNA + S-adenosyl-L-methionine = epoxyqueuosine(34) in tRNA + adenine + L-methionine + 2 H(+)</text>
        <dbReference type="Rhea" id="RHEA:32155"/>
        <dbReference type="Rhea" id="RHEA-COMP:10342"/>
        <dbReference type="Rhea" id="RHEA-COMP:18582"/>
        <dbReference type="ChEBI" id="CHEBI:15378"/>
        <dbReference type="ChEBI" id="CHEBI:16708"/>
        <dbReference type="ChEBI" id="CHEBI:57844"/>
        <dbReference type="ChEBI" id="CHEBI:59789"/>
        <dbReference type="ChEBI" id="CHEBI:82833"/>
        <dbReference type="ChEBI" id="CHEBI:194443"/>
        <dbReference type="EC" id="2.4.99.17"/>
    </reaction>
</comment>
<comment type="pathway">
    <text evidence="1">tRNA modification; tRNA-queuosine biosynthesis.</text>
</comment>
<comment type="subunit">
    <text evidence="1">Monomer.</text>
</comment>
<comment type="subcellular location">
    <subcellularLocation>
        <location evidence="1">Cytoplasm</location>
    </subcellularLocation>
</comment>
<comment type="similarity">
    <text evidence="1">Belongs to the QueA family.</text>
</comment>
<accession>Q07ZM1</accession>
<organism>
    <name type="scientific">Shewanella frigidimarina (strain NCIMB 400)</name>
    <dbReference type="NCBI Taxonomy" id="318167"/>
    <lineage>
        <taxon>Bacteria</taxon>
        <taxon>Pseudomonadati</taxon>
        <taxon>Pseudomonadota</taxon>
        <taxon>Gammaproteobacteria</taxon>
        <taxon>Alteromonadales</taxon>
        <taxon>Shewanellaceae</taxon>
        <taxon>Shewanella</taxon>
    </lineage>
</organism>
<name>QUEA_SHEFN</name>